<name>WDR3_HUMAN</name>
<accession>Q9UNX4</accession>
<gene>
    <name evidence="5" type="primary">WDR3</name>
</gene>
<comment type="function">
    <text evidence="3">Part of the small subunit (SSU) processome, first precursor of the small eukaryotic ribosomal subunit. During the assembly of the SSU processome in the nucleolus, many ribosome biogenesis factors, an RNA chaperone and ribosomal proteins associate with the nascent pre-rRNA and work in concert to generate RNA folding, modifications, rearrangements and cleavage as well as targeted degradation of pre-ribosomal RNA by the RNA exosome.</text>
</comment>
<comment type="subunit">
    <text evidence="3">Part of the small subunit (SSU) processome, composed of more than 70 proteins and the RNA chaperone small nucleolar RNA (snoRNA) U3.</text>
</comment>
<comment type="subcellular location">
    <subcellularLocation>
        <location evidence="2 3">Nucleus</location>
        <location evidence="2 3">Nucleolus</location>
    </subcellularLocation>
</comment>
<comment type="tissue specificity">
    <text>Ubiquitous.</text>
</comment>
<comment type="similarity">
    <text evidence="4">Belongs to the WD repeat WDR3/UTP12 family.</text>
</comment>
<organism>
    <name type="scientific">Homo sapiens</name>
    <name type="common">Human</name>
    <dbReference type="NCBI Taxonomy" id="9606"/>
    <lineage>
        <taxon>Eukaryota</taxon>
        <taxon>Metazoa</taxon>
        <taxon>Chordata</taxon>
        <taxon>Craniata</taxon>
        <taxon>Vertebrata</taxon>
        <taxon>Euteleostomi</taxon>
        <taxon>Mammalia</taxon>
        <taxon>Eutheria</taxon>
        <taxon>Euarchontoglires</taxon>
        <taxon>Primates</taxon>
        <taxon>Haplorrhini</taxon>
        <taxon>Catarrhini</taxon>
        <taxon>Hominidae</taxon>
        <taxon>Homo</taxon>
    </lineage>
</organism>
<evidence type="ECO:0000256" key="1">
    <source>
        <dbReference type="SAM" id="MobiDB-lite"/>
    </source>
</evidence>
<evidence type="ECO:0000269" key="2">
    <source>
    </source>
</evidence>
<evidence type="ECO:0000269" key="3">
    <source>
    </source>
</evidence>
<evidence type="ECO:0000305" key="4"/>
<evidence type="ECO:0000312" key="5">
    <source>
        <dbReference type="HGNC" id="HGNC:12755"/>
    </source>
</evidence>
<evidence type="ECO:0007744" key="6">
    <source>
        <dbReference type="PDB" id="7MQ8"/>
    </source>
</evidence>
<evidence type="ECO:0007744" key="7">
    <source>
        <dbReference type="PDB" id="7MQ9"/>
    </source>
</evidence>
<evidence type="ECO:0007744" key="8">
    <source>
        <dbReference type="PDB" id="7MQA"/>
    </source>
</evidence>
<evidence type="ECO:0007744" key="9">
    <source>
    </source>
</evidence>
<evidence type="ECO:0007744" key="10">
    <source>
    </source>
</evidence>
<evidence type="ECO:0007744" key="11">
    <source>
    </source>
</evidence>
<proteinExistence type="evidence at protein level"/>
<keyword id="KW-0002">3D-structure</keyword>
<keyword id="KW-1017">Isopeptide bond</keyword>
<keyword id="KW-0539">Nucleus</keyword>
<keyword id="KW-0597">Phosphoprotein</keyword>
<keyword id="KW-1267">Proteomics identification</keyword>
<keyword id="KW-1185">Reference proteome</keyword>
<keyword id="KW-0677">Repeat</keyword>
<keyword id="KW-0832">Ubl conjugation</keyword>
<keyword id="KW-0853">WD repeat</keyword>
<protein>
    <recommendedName>
        <fullName>WD repeat-containing protein 3</fullName>
    </recommendedName>
</protein>
<feature type="chain" id="PRO_0000051347" description="WD repeat-containing protein 3">
    <location>
        <begin position="1"/>
        <end position="943"/>
    </location>
</feature>
<feature type="repeat" description="WD 1">
    <location>
        <begin position="21"/>
        <end position="60"/>
    </location>
</feature>
<feature type="repeat" description="WD 2">
    <location>
        <begin position="63"/>
        <end position="102"/>
    </location>
</feature>
<feature type="repeat" description="WD 3">
    <location>
        <begin position="105"/>
        <end position="144"/>
    </location>
</feature>
<feature type="repeat" description="WD 4">
    <location>
        <begin position="147"/>
        <end position="186"/>
    </location>
</feature>
<feature type="repeat" description="WD 5">
    <location>
        <begin position="189"/>
        <end position="228"/>
    </location>
</feature>
<feature type="repeat" description="WD 6">
    <location>
        <begin position="277"/>
        <end position="316"/>
    </location>
</feature>
<feature type="repeat" description="WD 7">
    <location>
        <begin position="413"/>
        <end position="451"/>
    </location>
</feature>
<feature type="repeat" description="WD 8">
    <location>
        <begin position="453"/>
        <end position="493"/>
    </location>
</feature>
<feature type="repeat" description="WD 9">
    <location>
        <begin position="494"/>
        <end position="533"/>
    </location>
</feature>
<feature type="repeat" description="WD 10">
    <location>
        <begin position="547"/>
        <end position="586"/>
    </location>
</feature>
<feature type="repeat" description="WD 11">
    <location>
        <begin position="589"/>
        <end position="630"/>
    </location>
</feature>
<feature type="repeat" description="WD 12">
    <location>
        <begin position="631"/>
        <end position="670"/>
    </location>
</feature>
<feature type="repeat" description="WD 13">
    <location>
        <begin position="673"/>
        <end position="712"/>
    </location>
</feature>
<feature type="region of interest" description="Disordered" evidence="1">
    <location>
        <begin position="326"/>
        <end position="345"/>
    </location>
</feature>
<feature type="modified residue" description="Phosphoserine" evidence="9">
    <location>
        <position position="240"/>
    </location>
</feature>
<feature type="modified residue" description="Phosphoserine" evidence="9">
    <location>
        <position position="241"/>
    </location>
</feature>
<feature type="modified residue" description="Phosphothreonine" evidence="10">
    <location>
        <position position="257"/>
    </location>
</feature>
<feature type="modified residue" description="Phosphoserine" evidence="10">
    <location>
        <position position="726"/>
    </location>
</feature>
<feature type="cross-link" description="Glycyl lysine isopeptide (Lys-Gly) (interchain with G-Cter in SUMO2)" evidence="11">
    <location>
        <position position="474"/>
    </location>
</feature>
<feature type="cross-link" description="Glycyl lysine isopeptide (Lys-Gly) (interchain with G-Cter in SUMO2)" evidence="11">
    <location>
        <position position="529"/>
    </location>
</feature>
<feature type="sequence variant" id="VAR_033809" description="In dbSNP:rs3738420.">
    <original>P</original>
    <variation>A</variation>
    <location>
        <position position="234"/>
    </location>
</feature>
<dbReference type="EMBL" id="AF083217">
    <property type="protein sequence ID" value="AAD45865.1"/>
    <property type="molecule type" value="mRNA"/>
</dbReference>
<dbReference type="CCDS" id="CCDS898.1"/>
<dbReference type="RefSeq" id="NP_006775.1">
    <property type="nucleotide sequence ID" value="NM_006784.3"/>
</dbReference>
<dbReference type="PDB" id="7MQ8">
    <property type="method" value="EM"/>
    <property type="resolution" value="3.60 A"/>
    <property type="chains" value="LQ=1-943"/>
</dbReference>
<dbReference type="PDB" id="7MQ9">
    <property type="method" value="EM"/>
    <property type="resolution" value="3.87 A"/>
    <property type="chains" value="LQ=1-943"/>
</dbReference>
<dbReference type="PDB" id="7MQA">
    <property type="method" value="EM"/>
    <property type="resolution" value="2.70 A"/>
    <property type="chains" value="LQ=1-943"/>
</dbReference>
<dbReference type="PDBsum" id="7MQ8"/>
<dbReference type="PDBsum" id="7MQ9"/>
<dbReference type="PDBsum" id="7MQA"/>
<dbReference type="EMDB" id="EMD-23936"/>
<dbReference type="EMDB" id="EMD-23937"/>
<dbReference type="EMDB" id="EMD-23938"/>
<dbReference type="SMR" id="Q9UNX4"/>
<dbReference type="BioGRID" id="116092">
    <property type="interactions" value="191"/>
</dbReference>
<dbReference type="ComplexPortal" id="CPX-2688">
    <property type="entry name" value="UTP-B complex"/>
</dbReference>
<dbReference type="FunCoup" id="Q9UNX4">
    <property type="interactions" value="3665"/>
</dbReference>
<dbReference type="IntAct" id="Q9UNX4">
    <property type="interactions" value="76"/>
</dbReference>
<dbReference type="MINT" id="Q9UNX4"/>
<dbReference type="STRING" id="9606.ENSP00000308179"/>
<dbReference type="GlyGen" id="Q9UNX4">
    <property type="glycosylation" value="3 sites, 1 O-linked glycan (3 sites)"/>
</dbReference>
<dbReference type="iPTMnet" id="Q9UNX4"/>
<dbReference type="PhosphoSitePlus" id="Q9UNX4"/>
<dbReference type="SwissPalm" id="Q9UNX4"/>
<dbReference type="BioMuta" id="WDR3"/>
<dbReference type="DMDM" id="12230773"/>
<dbReference type="jPOST" id="Q9UNX4"/>
<dbReference type="MassIVE" id="Q9UNX4"/>
<dbReference type="PaxDb" id="9606-ENSP00000308179"/>
<dbReference type="PeptideAtlas" id="Q9UNX4"/>
<dbReference type="ProteomicsDB" id="85340"/>
<dbReference type="Pumba" id="Q9UNX4"/>
<dbReference type="Antibodypedia" id="33896">
    <property type="antibodies" value="99 antibodies from 21 providers"/>
</dbReference>
<dbReference type="DNASU" id="10885"/>
<dbReference type="Ensembl" id="ENST00000349139.6">
    <property type="protein sequence ID" value="ENSP00000308179.4"/>
    <property type="gene ID" value="ENSG00000065183.16"/>
</dbReference>
<dbReference type="GeneID" id="10885"/>
<dbReference type="KEGG" id="hsa:10885"/>
<dbReference type="MANE-Select" id="ENST00000349139.6">
    <property type="protein sequence ID" value="ENSP00000308179.4"/>
    <property type="RefSeq nucleotide sequence ID" value="NM_006784.3"/>
    <property type="RefSeq protein sequence ID" value="NP_006775.1"/>
</dbReference>
<dbReference type="UCSC" id="uc010oxe.2">
    <property type="organism name" value="human"/>
</dbReference>
<dbReference type="AGR" id="HGNC:12755"/>
<dbReference type="CTD" id="10885"/>
<dbReference type="DisGeNET" id="10885"/>
<dbReference type="GeneCards" id="WDR3"/>
<dbReference type="HGNC" id="HGNC:12755">
    <property type="gene designation" value="WDR3"/>
</dbReference>
<dbReference type="HPA" id="ENSG00000065183">
    <property type="expression patterns" value="Low tissue specificity"/>
</dbReference>
<dbReference type="MIM" id="604737">
    <property type="type" value="gene"/>
</dbReference>
<dbReference type="neXtProt" id="NX_Q9UNX4"/>
<dbReference type="OpenTargets" id="ENSG00000065183"/>
<dbReference type="PharmGKB" id="PA37359"/>
<dbReference type="VEuPathDB" id="HostDB:ENSG00000065183"/>
<dbReference type="eggNOG" id="KOG0306">
    <property type="taxonomic scope" value="Eukaryota"/>
</dbReference>
<dbReference type="GeneTree" id="ENSGT00940000153859"/>
<dbReference type="HOGENOM" id="CLU_005318_0_1_1"/>
<dbReference type="InParanoid" id="Q9UNX4"/>
<dbReference type="OMA" id="MNIPLTC"/>
<dbReference type="OrthoDB" id="407922at2759"/>
<dbReference type="PAN-GO" id="Q9UNX4">
    <property type="GO annotations" value="4 GO annotations based on evolutionary models"/>
</dbReference>
<dbReference type="PhylomeDB" id="Q9UNX4"/>
<dbReference type="TreeFam" id="TF300427"/>
<dbReference type="PathwayCommons" id="Q9UNX4"/>
<dbReference type="Reactome" id="R-HSA-6790901">
    <property type="pathway name" value="rRNA modification in the nucleus and cytosol"/>
</dbReference>
<dbReference type="Reactome" id="R-HSA-6791226">
    <property type="pathway name" value="Major pathway of rRNA processing in the nucleolus and cytosol"/>
</dbReference>
<dbReference type="SignaLink" id="Q9UNX4"/>
<dbReference type="BioGRID-ORCS" id="10885">
    <property type="hits" value="796 hits in 1164 CRISPR screens"/>
</dbReference>
<dbReference type="CD-CODE" id="91857CE7">
    <property type="entry name" value="Nucleolus"/>
</dbReference>
<dbReference type="GeneWiki" id="WDR3"/>
<dbReference type="GenomeRNAi" id="10885"/>
<dbReference type="Pharos" id="Q9UNX4">
    <property type="development level" value="Tbio"/>
</dbReference>
<dbReference type="PRO" id="PR:Q9UNX4"/>
<dbReference type="Proteomes" id="UP000005640">
    <property type="component" value="Chromosome 1"/>
</dbReference>
<dbReference type="RNAct" id="Q9UNX4">
    <property type="molecule type" value="protein"/>
</dbReference>
<dbReference type="Bgee" id="ENSG00000065183">
    <property type="expression patterns" value="Expressed in cervix squamous epithelium and 207 other cell types or tissues"/>
</dbReference>
<dbReference type="ExpressionAtlas" id="Q9UNX4">
    <property type="expression patterns" value="baseline and differential"/>
</dbReference>
<dbReference type="GO" id="GO:0031965">
    <property type="term" value="C:nuclear membrane"/>
    <property type="evidence" value="ECO:0000314"/>
    <property type="project" value="HPA"/>
</dbReference>
<dbReference type="GO" id="GO:0005730">
    <property type="term" value="C:nucleolus"/>
    <property type="evidence" value="ECO:0000314"/>
    <property type="project" value="HPA"/>
</dbReference>
<dbReference type="GO" id="GO:0005654">
    <property type="term" value="C:nucleoplasm"/>
    <property type="evidence" value="ECO:0000314"/>
    <property type="project" value="HPA"/>
</dbReference>
<dbReference type="GO" id="GO:0034388">
    <property type="term" value="C:Pwp2p-containing subcomplex of 90S preribosome"/>
    <property type="evidence" value="ECO:0000318"/>
    <property type="project" value="GO_Central"/>
</dbReference>
<dbReference type="GO" id="GO:0032040">
    <property type="term" value="C:small-subunit processome"/>
    <property type="evidence" value="ECO:0000314"/>
    <property type="project" value="UniProtKB"/>
</dbReference>
<dbReference type="GO" id="GO:0003723">
    <property type="term" value="F:RNA binding"/>
    <property type="evidence" value="ECO:0007005"/>
    <property type="project" value="UniProtKB"/>
</dbReference>
<dbReference type="GO" id="GO:0030515">
    <property type="term" value="F:snoRNA binding"/>
    <property type="evidence" value="ECO:0000318"/>
    <property type="project" value="GO_Central"/>
</dbReference>
<dbReference type="GO" id="GO:0030490">
    <property type="term" value="P:maturation of SSU-rRNA"/>
    <property type="evidence" value="ECO:0000318"/>
    <property type="project" value="GO_Central"/>
</dbReference>
<dbReference type="GO" id="GO:0042274">
    <property type="term" value="P:ribosomal small subunit biogenesis"/>
    <property type="evidence" value="ECO:0000314"/>
    <property type="project" value="UniProtKB"/>
</dbReference>
<dbReference type="CDD" id="cd00200">
    <property type="entry name" value="WD40"/>
    <property type="match status" value="1"/>
</dbReference>
<dbReference type="FunFam" id="2.130.10.10:FF:000172">
    <property type="entry name" value="WD repeat domain 3"/>
    <property type="match status" value="1"/>
</dbReference>
<dbReference type="FunFam" id="2.130.10.10:FF:000177">
    <property type="entry name" value="WD repeat domain 3"/>
    <property type="match status" value="1"/>
</dbReference>
<dbReference type="FunFam" id="2.130.10.10:FF:000307">
    <property type="entry name" value="WD repeat domain 3"/>
    <property type="match status" value="1"/>
</dbReference>
<dbReference type="FunFam" id="2.130.10.10:FF:001148">
    <property type="entry name" value="WD repeat-containing protein 3"/>
    <property type="match status" value="1"/>
</dbReference>
<dbReference type="Gene3D" id="2.130.10.10">
    <property type="entry name" value="YVTN repeat-like/Quinoprotein amine dehydrogenase"/>
    <property type="match status" value="4"/>
</dbReference>
<dbReference type="InterPro" id="IPR020472">
    <property type="entry name" value="G-protein_beta_WD-40_rep"/>
</dbReference>
<dbReference type="InterPro" id="IPR007148">
    <property type="entry name" value="SSU_processome_Utp12"/>
</dbReference>
<dbReference type="InterPro" id="IPR051570">
    <property type="entry name" value="TBC1_cilium_biogenesis"/>
</dbReference>
<dbReference type="InterPro" id="IPR015943">
    <property type="entry name" value="WD40/YVTN_repeat-like_dom_sf"/>
</dbReference>
<dbReference type="InterPro" id="IPR019775">
    <property type="entry name" value="WD40_repeat_CS"/>
</dbReference>
<dbReference type="InterPro" id="IPR036322">
    <property type="entry name" value="WD40_repeat_dom_sf"/>
</dbReference>
<dbReference type="InterPro" id="IPR001680">
    <property type="entry name" value="WD40_rpt"/>
</dbReference>
<dbReference type="PANTHER" id="PTHR19853">
    <property type="entry name" value="WD REPEAT CONTAINING PROTEIN 3 WDR3"/>
    <property type="match status" value="1"/>
</dbReference>
<dbReference type="PANTHER" id="PTHR19853:SF0">
    <property type="entry name" value="WD REPEAT-CONTAINING PROTEIN 3"/>
    <property type="match status" value="1"/>
</dbReference>
<dbReference type="Pfam" id="PF25173">
    <property type="entry name" value="Beta-prop_WDR3_1st"/>
    <property type="match status" value="1"/>
</dbReference>
<dbReference type="Pfam" id="PF25172">
    <property type="entry name" value="Beta-prop_WDR3_2nd"/>
    <property type="match status" value="1"/>
</dbReference>
<dbReference type="Pfam" id="PF04003">
    <property type="entry name" value="Utp12"/>
    <property type="match status" value="1"/>
</dbReference>
<dbReference type="PRINTS" id="PR00320">
    <property type="entry name" value="GPROTEINBRPT"/>
</dbReference>
<dbReference type="SMART" id="SM00320">
    <property type="entry name" value="WD40"/>
    <property type="match status" value="11"/>
</dbReference>
<dbReference type="SUPFAM" id="SSF117289">
    <property type="entry name" value="Nucleoporin domain"/>
    <property type="match status" value="1"/>
</dbReference>
<dbReference type="SUPFAM" id="SSF50978">
    <property type="entry name" value="WD40 repeat-like"/>
    <property type="match status" value="1"/>
</dbReference>
<dbReference type="PROSITE" id="PS00678">
    <property type="entry name" value="WD_REPEATS_1"/>
    <property type="match status" value="2"/>
</dbReference>
<dbReference type="PROSITE" id="PS50082">
    <property type="entry name" value="WD_REPEATS_2"/>
    <property type="match status" value="9"/>
</dbReference>
<dbReference type="PROSITE" id="PS50294">
    <property type="entry name" value="WD_REPEATS_REGION"/>
    <property type="match status" value="1"/>
</dbReference>
<reference key="1">
    <citation type="journal article" date="1999" name="Genomics">
        <title>Cloning and expression analysis of a novel WD repeat gene, WDR3, mapping to 1p12-p13.</title>
        <authorList>
            <person name="Claudio J.O."/>
            <person name="Liew C.-C."/>
            <person name="Ma J."/>
            <person name="Heng H.H.Q."/>
            <person name="Stewart A.K."/>
            <person name="Hawley R.G."/>
        </authorList>
    </citation>
    <scope>NUCLEOTIDE SEQUENCE [MRNA]</scope>
</reference>
<reference key="2">
    <citation type="journal article" date="2002" name="Mol. Biol. Cell">
        <title>Functional proteomic analysis of human nucleolus.</title>
        <authorList>
            <person name="Scherl A."/>
            <person name="Coute Y."/>
            <person name="Deon C."/>
            <person name="Calle A."/>
            <person name="Kindbeiter K."/>
            <person name="Sanchez J.-C."/>
            <person name="Greco A."/>
            <person name="Hochstrasser D.F."/>
            <person name="Diaz J.-J."/>
        </authorList>
    </citation>
    <scope>SUBCELLULAR LOCATION [LARGE SCALE ANALYSIS]</scope>
    <source>
        <tissue>Cervix carcinoma</tissue>
    </source>
</reference>
<reference key="3">
    <citation type="journal article" date="2006" name="Cell">
        <title>Global, in vivo, and site-specific phosphorylation dynamics in signaling networks.</title>
        <authorList>
            <person name="Olsen J.V."/>
            <person name="Blagoev B."/>
            <person name="Gnad F."/>
            <person name="Macek B."/>
            <person name="Kumar C."/>
            <person name="Mortensen P."/>
            <person name="Mann M."/>
        </authorList>
    </citation>
    <scope>IDENTIFICATION BY MASS SPECTROMETRY [LARGE SCALE ANALYSIS]</scope>
    <source>
        <tissue>Cervix carcinoma</tissue>
    </source>
</reference>
<reference key="4">
    <citation type="journal article" date="2008" name="Proc. Natl. Acad. Sci. U.S.A.">
        <title>A quantitative atlas of mitotic phosphorylation.</title>
        <authorList>
            <person name="Dephoure N."/>
            <person name="Zhou C."/>
            <person name="Villen J."/>
            <person name="Beausoleil S.A."/>
            <person name="Bakalarski C.E."/>
            <person name="Elledge S.J."/>
            <person name="Gygi S.P."/>
        </authorList>
    </citation>
    <scope>PHOSPHORYLATION [LARGE SCALE ANALYSIS] AT SER-240 AND SER-241</scope>
    <scope>IDENTIFICATION BY MASS SPECTROMETRY [LARGE SCALE ANALYSIS]</scope>
    <source>
        <tissue>Cervix carcinoma</tissue>
    </source>
</reference>
<reference key="5">
    <citation type="journal article" date="2009" name="Anal. Chem.">
        <title>Lys-N and trypsin cover complementary parts of the phosphoproteome in a refined SCX-based approach.</title>
        <authorList>
            <person name="Gauci S."/>
            <person name="Helbig A.O."/>
            <person name="Slijper M."/>
            <person name="Krijgsveld J."/>
            <person name="Heck A.J."/>
            <person name="Mohammed S."/>
        </authorList>
    </citation>
    <scope>IDENTIFICATION BY MASS SPECTROMETRY [LARGE SCALE ANALYSIS]</scope>
</reference>
<reference key="6">
    <citation type="journal article" date="2009" name="Sci. Signal.">
        <title>Quantitative phosphoproteomic analysis of T cell receptor signaling reveals system-wide modulation of protein-protein interactions.</title>
        <authorList>
            <person name="Mayya V."/>
            <person name="Lundgren D.H."/>
            <person name="Hwang S.-I."/>
            <person name="Rezaul K."/>
            <person name="Wu L."/>
            <person name="Eng J.K."/>
            <person name="Rodionov V."/>
            <person name="Han D.K."/>
        </authorList>
    </citation>
    <scope>IDENTIFICATION BY MASS SPECTROMETRY [LARGE SCALE ANALYSIS]</scope>
    <source>
        <tissue>Leukemic T-cell</tissue>
    </source>
</reference>
<reference key="7">
    <citation type="journal article" date="2010" name="Sci. Signal.">
        <title>Quantitative phosphoproteomics reveals widespread full phosphorylation site occupancy during mitosis.</title>
        <authorList>
            <person name="Olsen J.V."/>
            <person name="Vermeulen M."/>
            <person name="Santamaria A."/>
            <person name="Kumar C."/>
            <person name="Miller M.L."/>
            <person name="Jensen L.J."/>
            <person name="Gnad F."/>
            <person name="Cox J."/>
            <person name="Jensen T.S."/>
            <person name="Nigg E.A."/>
            <person name="Brunak S."/>
            <person name="Mann M."/>
        </authorList>
    </citation>
    <scope>IDENTIFICATION BY MASS SPECTROMETRY [LARGE SCALE ANALYSIS]</scope>
    <source>
        <tissue>Cervix carcinoma</tissue>
    </source>
</reference>
<reference key="8">
    <citation type="journal article" date="2011" name="Sci. Signal.">
        <title>System-wide temporal characterization of the proteome and phosphoproteome of human embryonic stem cell differentiation.</title>
        <authorList>
            <person name="Rigbolt K.T."/>
            <person name="Prokhorova T.A."/>
            <person name="Akimov V."/>
            <person name="Henningsen J."/>
            <person name="Johansen P.T."/>
            <person name="Kratchmarova I."/>
            <person name="Kassem M."/>
            <person name="Mann M."/>
            <person name="Olsen J.V."/>
            <person name="Blagoev B."/>
        </authorList>
    </citation>
    <scope>IDENTIFICATION BY MASS SPECTROMETRY [LARGE SCALE ANALYSIS]</scope>
</reference>
<reference key="9">
    <citation type="journal article" date="2013" name="J. Proteome Res.">
        <title>Toward a comprehensive characterization of a human cancer cell phosphoproteome.</title>
        <authorList>
            <person name="Zhou H."/>
            <person name="Di Palma S."/>
            <person name="Preisinger C."/>
            <person name="Peng M."/>
            <person name="Polat A.N."/>
            <person name="Heck A.J."/>
            <person name="Mohammed S."/>
        </authorList>
    </citation>
    <scope>PHOSPHORYLATION [LARGE SCALE ANALYSIS] AT THR-257 AND SER-726</scope>
    <scope>IDENTIFICATION BY MASS SPECTROMETRY [LARGE SCALE ANALYSIS]</scope>
    <source>
        <tissue>Cervix carcinoma</tissue>
        <tissue>Erythroleukemia</tissue>
    </source>
</reference>
<reference key="10">
    <citation type="journal article" date="2017" name="Nat. Struct. Mol. Biol.">
        <title>Site-specific mapping of the human SUMO proteome reveals co-modification with phosphorylation.</title>
        <authorList>
            <person name="Hendriks I.A."/>
            <person name="Lyon D."/>
            <person name="Young C."/>
            <person name="Jensen L.J."/>
            <person name="Vertegaal A.C."/>
            <person name="Nielsen M.L."/>
        </authorList>
    </citation>
    <scope>SUMOYLATION [LARGE SCALE ANALYSIS] AT LYS-474 AND LYS-529</scope>
    <scope>IDENTIFICATION BY MASS SPECTROMETRY [LARGE SCALE ANALYSIS]</scope>
</reference>
<reference evidence="6 7 8" key="11">
    <citation type="journal article" date="2021" name="Science">
        <title>Nucleolar maturation of the human small subunit processome.</title>
        <authorList>
            <person name="Singh S."/>
            <person name="Vanden Broeck A."/>
            <person name="Miller L."/>
            <person name="Chaker-Margot M."/>
            <person name="Klinge S."/>
        </authorList>
    </citation>
    <scope>STRUCTURE BY ELECTRON MICROSCOPY (2.70 ANGSTROMS)</scope>
    <scope>FUNCTION</scope>
    <scope>SUBUNIT</scope>
    <scope>SUBCELLULAR LOCATION</scope>
</reference>
<sequence>MGLTKQYLRYVASAVFGVIGSQKGNIVFVTLRGEKGRYVAVPACEHVFIWDLRKGEKILILQGLKQEVTCLCPSPDGLHLAVGYEDGSIRIFSLLSGEGNVTFNGHKAAITTLKYDQLGGRLASGSKDTDIIVWDVINESGLYRLKGHKDAITQALFLREKNLLVTSGKDTMVKWWDLDTQHCFKTMVGHRTEVWGLVLLSEEKRLITGASDSELRVWDIAYLQEIEDPEEPDPKKIKGSSPGIQDTLEAEDGAFETDEAPEDRILSCRKAGSIMREGRDRVVNLAVDKTGRILACHGTDSVLELFCILSKKEIQKKMDKKMKKARKKAKLHSSKGEEEDPEVNVEMSLQDEIQRVTNIKTSAKIKSFDLIHSPHGELKAVFLLQNNLVELYSLNPSLPTPQPVRTSRITIGGHRSDVRTLSFSSDNIAVLSAAADSIKIWNRSTLQCIRTMTCEYALCSFFVPGDRQVVIGTKTGKLQLYDLASGNLLETIDAHDGALWSMSLSPDQRGFVTGGADKSVKFWDFELVKDENSTQKRLSVKQTRTLQLDEDVLCVSYSPNQKLLAVSLLDCTVKIFYVDTLKFFLSLYGHKLPVICMDISHDGALIATGSADRNVKIWGLDFGDCHKSLFAHDDSVMYLQFVPKSHLFFTAGKDHKIKQWDADKFEHIQTLEGHHQEIWCLAVSPSGDYVVSSSHDKSLRLWERTREPLILEEEREMEREAEYEESVAKEDQPAVPGETQGDSYFTGKKTIETVKAAERIMEAIELYREETAKMKEHKAICKAAGKEVPLPSNPILMAYGSISPSAYVLEIFKGIKSSELEESLLVLPFSYVPDILKLFNEFIQLGSDVELICRCLFFLLRIHFGQITSNQMLVPVIEKLRETTISKVSQVRDVIGFNMAGLDYLKRECEAKSEVMFFADATSHLEEKKRKRKKREKLILTLT</sequence>